<dbReference type="EC" id="1.1.1.290" evidence="1"/>
<dbReference type="EMBL" id="CP000931">
    <property type="protein sequence ID" value="ABZ77199.1"/>
    <property type="molecule type" value="Genomic_DNA"/>
</dbReference>
<dbReference type="RefSeq" id="WP_012277727.1">
    <property type="nucleotide sequence ID" value="NC_010334.1"/>
</dbReference>
<dbReference type="SMR" id="B0TKZ7"/>
<dbReference type="STRING" id="458817.Shal_2644"/>
<dbReference type="KEGG" id="shl:Shal_2644"/>
<dbReference type="eggNOG" id="COG0111">
    <property type="taxonomic scope" value="Bacteria"/>
</dbReference>
<dbReference type="HOGENOM" id="CLU_019796_4_0_6"/>
<dbReference type="OrthoDB" id="9770208at2"/>
<dbReference type="UniPathway" id="UPA00244">
    <property type="reaction ID" value="UER00310"/>
</dbReference>
<dbReference type="Proteomes" id="UP000001317">
    <property type="component" value="Chromosome"/>
</dbReference>
<dbReference type="GO" id="GO:0005737">
    <property type="term" value="C:cytoplasm"/>
    <property type="evidence" value="ECO:0007669"/>
    <property type="project" value="UniProtKB-SubCell"/>
</dbReference>
<dbReference type="GO" id="GO:0033711">
    <property type="term" value="F:4-phosphoerythronate dehydrogenase activity"/>
    <property type="evidence" value="ECO:0007669"/>
    <property type="project" value="UniProtKB-EC"/>
</dbReference>
<dbReference type="GO" id="GO:0051287">
    <property type="term" value="F:NAD binding"/>
    <property type="evidence" value="ECO:0007669"/>
    <property type="project" value="InterPro"/>
</dbReference>
<dbReference type="GO" id="GO:0046983">
    <property type="term" value="F:protein dimerization activity"/>
    <property type="evidence" value="ECO:0007669"/>
    <property type="project" value="InterPro"/>
</dbReference>
<dbReference type="GO" id="GO:0008615">
    <property type="term" value="P:pyridoxine biosynthetic process"/>
    <property type="evidence" value="ECO:0007669"/>
    <property type="project" value="UniProtKB-UniRule"/>
</dbReference>
<dbReference type="CDD" id="cd12158">
    <property type="entry name" value="ErythrP_dh"/>
    <property type="match status" value="1"/>
</dbReference>
<dbReference type="Gene3D" id="3.30.1370.170">
    <property type="match status" value="1"/>
</dbReference>
<dbReference type="Gene3D" id="3.40.50.720">
    <property type="entry name" value="NAD(P)-binding Rossmann-like Domain"/>
    <property type="match status" value="2"/>
</dbReference>
<dbReference type="HAMAP" id="MF_01825">
    <property type="entry name" value="PdxB"/>
    <property type="match status" value="1"/>
</dbReference>
<dbReference type="InterPro" id="IPR050418">
    <property type="entry name" value="D-iso_2-hydroxyacid_DH_PdxB"/>
</dbReference>
<dbReference type="InterPro" id="IPR006139">
    <property type="entry name" value="D-isomer_2_OHA_DH_cat_dom"/>
</dbReference>
<dbReference type="InterPro" id="IPR029753">
    <property type="entry name" value="D-isomer_DH_CS"/>
</dbReference>
<dbReference type="InterPro" id="IPR006140">
    <property type="entry name" value="D-isomer_DH_NAD-bd"/>
</dbReference>
<dbReference type="InterPro" id="IPR020921">
    <property type="entry name" value="Erythronate-4-P_DHase"/>
</dbReference>
<dbReference type="InterPro" id="IPR024531">
    <property type="entry name" value="Erythronate-4-P_DHase_dimer"/>
</dbReference>
<dbReference type="InterPro" id="IPR036291">
    <property type="entry name" value="NAD(P)-bd_dom_sf"/>
</dbReference>
<dbReference type="InterPro" id="IPR038251">
    <property type="entry name" value="PdxB_dimer_sf"/>
</dbReference>
<dbReference type="PANTHER" id="PTHR43761:SF1">
    <property type="entry name" value="D-ISOMER SPECIFIC 2-HYDROXYACID DEHYDROGENASE CATALYTIC DOMAIN-CONTAINING PROTEIN-RELATED"/>
    <property type="match status" value="1"/>
</dbReference>
<dbReference type="PANTHER" id="PTHR43761">
    <property type="entry name" value="D-ISOMER SPECIFIC 2-HYDROXYACID DEHYDROGENASE FAMILY PROTEIN (AFU_ORTHOLOGUE AFUA_1G13630)"/>
    <property type="match status" value="1"/>
</dbReference>
<dbReference type="Pfam" id="PF00389">
    <property type="entry name" value="2-Hacid_dh"/>
    <property type="match status" value="1"/>
</dbReference>
<dbReference type="Pfam" id="PF02826">
    <property type="entry name" value="2-Hacid_dh_C"/>
    <property type="match status" value="1"/>
</dbReference>
<dbReference type="Pfam" id="PF11890">
    <property type="entry name" value="DUF3410"/>
    <property type="match status" value="1"/>
</dbReference>
<dbReference type="SUPFAM" id="SSF52283">
    <property type="entry name" value="Formate/glycerate dehydrogenase catalytic domain-like"/>
    <property type="match status" value="1"/>
</dbReference>
<dbReference type="SUPFAM" id="SSF51735">
    <property type="entry name" value="NAD(P)-binding Rossmann-fold domains"/>
    <property type="match status" value="1"/>
</dbReference>
<dbReference type="PROSITE" id="PS00671">
    <property type="entry name" value="D_2_HYDROXYACID_DH_3"/>
    <property type="match status" value="1"/>
</dbReference>
<keyword id="KW-0963">Cytoplasm</keyword>
<keyword id="KW-0520">NAD</keyword>
<keyword id="KW-0560">Oxidoreductase</keyword>
<keyword id="KW-0664">Pyridoxine biosynthesis</keyword>
<protein>
    <recommendedName>
        <fullName evidence="1">Erythronate-4-phosphate dehydrogenase</fullName>
        <ecNumber evidence="1">1.1.1.290</ecNumber>
    </recommendedName>
</protein>
<name>PDXB_SHEHH</name>
<accession>B0TKZ7</accession>
<proteinExistence type="inferred from homology"/>
<gene>
    <name evidence="1" type="primary">pdxB</name>
    <name type="ordered locus">Shal_2644</name>
</gene>
<reference key="1">
    <citation type="submission" date="2008-01" db="EMBL/GenBank/DDBJ databases">
        <title>Complete sequence of Shewanella halifaxensis HAW-EB4.</title>
        <authorList>
            <consortium name="US DOE Joint Genome Institute"/>
            <person name="Copeland A."/>
            <person name="Lucas S."/>
            <person name="Lapidus A."/>
            <person name="Glavina del Rio T."/>
            <person name="Dalin E."/>
            <person name="Tice H."/>
            <person name="Bruce D."/>
            <person name="Goodwin L."/>
            <person name="Pitluck S."/>
            <person name="Sims D."/>
            <person name="Brettin T."/>
            <person name="Detter J.C."/>
            <person name="Han C."/>
            <person name="Kuske C.R."/>
            <person name="Schmutz J."/>
            <person name="Larimer F."/>
            <person name="Land M."/>
            <person name="Hauser L."/>
            <person name="Kyrpides N."/>
            <person name="Kim E."/>
            <person name="Zhao J.-S."/>
            <person name="Richardson P."/>
        </authorList>
    </citation>
    <scope>NUCLEOTIDE SEQUENCE [LARGE SCALE GENOMIC DNA]</scope>
    <source>
        <strain>HAW-EB4</strain>
    </source>
</reference>
<evidence type="ECO:0000255" key="1">
    <source>
        <dbReference type="HAMAP-Rule" id="MF_01825"/>
    </source>
</evidence>
<feature type="chain" id="PRO_1000088429" description="Erythronate-4-phosphate dehydrogenase">
    <location>
        <begin position="1"/>
        <end position="376"/>
    </location>
</feature>
<feature type="active site" evidence="1">
    <location>
        <position position="209"/>
    </location>
</feature>
<feature type="active site" evidence="1">
    <location>
        <position position="238"/>
    </location>
</feature>
<feature type="active site" description="Proton donor" evidence="1">
    <location>
        <position position="255"/>
    </location>
</feature>
<feature type="binding site" evidence="1">
    <location>
        <position position="45"/>
    </location>
    <ligand>
        <name>substrate</name>
    </ligand>
</feature>
<feature type="binding site" evidence="1">
    <location>
        <position position="67"/>
    </location>
    <ligand>
        <name>substrate</name>
    </ligand>
</feature>
<feature type="binding site" evidence="1">
    <location>
        <position position="147"/>
    </location>
    <ligand>
        <name>NAD(+)</name>
        <dbReference type="ChEBI" id="CHEBI:57540"/>
    </ligand>
</feature>
<feature type="binding site" evidence="1">
    <location>
        <position position="233"/>
    </location>
    <ligand>
        <name>NAD(+)</name>
        <dbReference type="ChEBI" id="CHEBI:57540"/>
    </ligand>
</feature>
<feature type="binding site" evidence="1">
    <location>
        <position position="258"/>
    </location>
    <ligand>
        <name>NAD(+)</name>
        <dbReference type="ChEBI" id="CHEBI:57540"/>
    </ligand>
</feature>
<feature type="binding site" evidence="1">
    <location>
        <position position="259"/>
    </location>
    <ligand>
        <name>substrate</name>
    </ligand>
</feature>
<organism>
    <name type="scientific">Shewanella halifaxensis (strain HAW-EB4)</name>
    <dbReference type="NCBI Taxonomy" id="458817"/>
    <lineage>
        <taxon>Bacteria</taxon>
        <taxon>Pseudomonadati</taxon>
        <taxon>Pseudomonadota</taxon>
        <taxon>Gammaproteobacteria</taxon>
        <taxon>Alteromonadales</taxon>
        <taxon>Shewanellaceae</taxon>
        <taxon>Shewanella</taxon>
    </lineage>
</organism>
<sequence>MKILADENMPYVQQLFGDLGTIETVNGRELTPEQVKDADVLLVRSVTKVDQALLAENNRLKFVGSATIGTDHIDLDYLASHNIPFSNAPGCNATAVGEFAFIAMLELAQRFNSPLKGKVVGIVGAGNTGTAVVKCLEAYGIEVLLNDPLLEQSGDPRDFVSLDTLIEKCDVISLHVPITKTGEHKTWYLFDEQRLNSLAENTWLVNCCRGEVIDNRALIKFKQQRDDVKVVLDVWEGEPNPMPELVPYVEFCTPHIAGYSLEGKARGTYILYQKLAEVLQISADKQMESLLPALWSERVLVQEISDERALLQLARFVYDLRDDDELFRKQFLNNQGFDHMRKNHTHRREFSALKVGNTGQTNVNWLSNLGFSGVEL</sequence>
<comment type="function">
    <text evidence="1">Catalyzes the oxidation of erythronate-4-phosphate to 3-hydroxy-2-oxo-4-phosphonooxybutanoate.</text>
</comment>
<comment type="catalytic activity">
    <reaction evidence="1">
        <text>4-phospho-D-erythronate + NAD(+) = (R)-3-hydroxy-2-oxo-4-phosphooxybutanoate + NADH + H(+)</text>
        <dbReference type="Rhea" id="RHEA:18829"/>
        <dbReference type="ChEBI" id="CHEBI:15378"/>
        <dbReference type="ChEBI" id="CHEBI:57540"/>
        <dbReference type="ChEBI" id="CHEBI:57945"/>
        <dbReference type="ChEBI" id="CHEBI:58538"/>
        <dbReference type="ChEBI" id="CHEBI:58766"/>
        <dbReference type="EC" id="1.1.1.290"/>
    </reaction>
</comment>
<comment type="pathway">
    <text evidence="1">Cofactor biosynthesis; pyridoxine 5'-phosphate biosynthesis; pyridoxine 5'-phosphate from D-erythrose 4-phosphate: step 2/5.</text>
</comment>
<comment type="subunit">
    <text evidence="1">Homodimer.</text>
</comment>
<comment type="subcellular location">
    <subcellularLocation>
        <location evidence="1">Cytoplasm</location>
    </subcellularLocation>
</comment>
<comment type="similarity">
    <text evidence="1">Belongs to the D-isomer specific 2-hydroxyacid dehydrogenase family. PdxB subfamily.</text>
</comment>